<sequence>MGYLFEETLSSNPKTPIVVDDDNELGLMAVRLANAAAFPMVLKASLELGVFDTLYAEASRTDSFLSPSEIASKLPTTPRNPGAPVLLDRMLRLLASYSMVKCEKVSVGKGERVYRAEPICRFFLKNNIQDIGSLASQVIVNFDSVFLNTWAQLKDVVLEGGDAFGRAHGGMKLFDYMGTDERFSKLFNQTGFTIAVVKKALEVYQGFKGVNVLVDVGGGVGNTLGVVTSKYPNIKGINFDLTCALAQAPSYPGVEHVAGDMFVDVPTGDAMILKRILHDWTDEDCVKILKNCWKSLPENGKVVVIELVTPDEAENGDINANIAFDMDMLMFTQCSGGKERSRAEFEALAAASCFTHCKFVCQAYHCWIIEFCK</sequence>
<name>IGMT2_ARATH</name>
<evidence type="ECO:0000250" key="1">
    <source>
        <dbReference type="UniProtKB" id="P28002"/>
    </source>
</evidence>
<evidence type="ECO:0000255" key="2">
    <source>
        <dbReference type="PROSITE-ProRule" id="PRU01020"/>
    </source>
</evidence>
<evidence type="ECO:0000269" key="3">
    <source>
    </source>
</evidence>
<evidence type="ECO:0000269" key="4">
    <source>
    </source>
</evidence>
<evidence type="ECO:0000303" key="5">
    <source>
    </source>
</evidence>
<evidence type="ECO:0000305" key="6"/>
<evidence type="ECO:0000312" key="7">
    <source>
        <dbReference type="Araport" id="AT1G21120"/>
    </source>
</evidence>
<evidence type="ECO:0000312" key="8">
    <source>
        <dbReference type="EMBL" id="AAF80649.1"/>
    </source>
</evidence>
<gene>
    <name evidence="5" type="primary">IGMT2</name>
    <name evidence="7" type="ordered locus">At1g21120</name>
    <name evidence="8" type="ORF">T22I11.5</name>
</gene>
<feature type="chain" id="PRO_0000435496" description="Indole glucosinolate O-methyltransferase 2">
    <location>
        <begin position="1"/>
        <end position="373"/>
    </location>
</feature>
<feature type="active site" description="Proton acceptor" evidence="1 2">
    <location>
        <position position="278"/>
    </location>
</feature>
<feature type="binding site" evidence="1">
    <location>
        <position position="217"/>
    </location>
    <ligand>
        <name>S-adenosyl-L-homocysteine</name>
        <dbReference type="ChEBI" id="CHEBI:57856"/>
    </ligand>
</feature>
<feature type="binding site" evidence="1">
    <location>
        <position position="240"/>
    </location>
    <ligand>
        <name>S-adenosyl-L-homocysteine</name>
        <dbReference type="ChEBI" id="CHEBI:57856"/>
    </ligand>
</feature>
<feature type="binding site" evidence="1">
    <location>
        <position position="260"/>
    </location>
    <ligand>
        <name>S-adenosyl-L-homocysteine</name>
        <dbReference type="ChEBI" id="CHEBI:57856"/>
    </ligand>
</feature>
<feature type="binding site" evidence="1">
    <location>
        <position position="261"/>
    </location>
    <ligand>
        <name>S-adenosyl-L-homocysteine</name>
        <dbReference type="ChEBI" id="CHEBI:57856"/>
    </ligand>
</feature>
<feature type="binding site" evidence="1">
    <location>
        <position position="274"/>
    </location>
    <ligand>
        <name>S-adenosyl-L-homocysteine</name>
        <dbReference type="ChEBI" id="CHEBI:57856"/>
    </ligand>
</feature>
<feature type="sequence conflict" description="In Ref. 4; BAD94958." evidence="6" ref="4">
    <original>T</original>
    <variation>I</variation>
    <location>
        <position position="309"/>
    </location>
</feature>
<keyword id="KW-0489">Methyltransferase</keyword>
<keyword id="KW-1185">Reference proteome</keyword>
<keyword id="KW-0949">S-adenosyl-L-methionine</keyword>
<keyword id="KW-0808">Transferase</keyword>
<reference key="1">
    <citation type="journal article" date="2000" name="Nature">
        <title>Sequence and analysis of chromosome 1 of the plant Arabidopsis thaliana.</title>
        <authorList>
            <person name="Theologis A."/>
            <person name="Ecker J.R."/>
            <person name="Palm C.J."/>
            <person name="Federspiel N.A."/>
            <person name="Kaul S."/>
            <person name="White O."/>
            <person name="Alonso J."/>
            <person name="Altafi H."/>
            <person name="Araujo R."/>
            <person name="Bowman C.L."/>
            <person name="Brooks S.Y."/>
            <person name="Buehler E."/>
            <person name="Chan A."/>
            <person name="Chao Q."/>
            <person name="Chen H."/>
            <person name="Cheuk R.F."/>
            <person name="Chin C.W."/>
            <person name="Chung M.K."/>
            <person name="Conn L."/>
            <person name="Conway A.B."/>
            <person name="Conway A.R."/>
            <person name="Creasy T.H."/>
            <person name="Dewar K."/>
            <person name="Dunn P."/>
            <person name="Etgu P."/>
            <person name="Feldblyum T.V."/>
            <person name="Feng J.-D."/>
            <person name="Fong B."/>
            <person name="Fujii C.Y."/>
            <person name="Gill J.E."/>
            <person name="Goldsmith A.D."/>
            <person name="Haas B."/>
            <person name="Hansen N.F."/>
            <person name="Hughes B."/>
            <person name="Huizar L."/>
            <person name="Hunter J.L."/>
            <person name="Jenkins J."/>
            <person name="Johnson-Hopson C."/>
            <person name="Khan S."/>
            <person name="Khaykin E."/>
            <person name="Kim C.J."/>
            <person name="Koo H.L."/>
            <person name="Kremenetskaia I."/>
            <person name="Kurtz D.B."/>
            <person name="Kwan A."/>
            <person name="Lam B."/>
            <person name="Langin-Hooper S."/>
            <person name="Lee A."/>
            <person name="Lee J.M."/>
            <person name="Lenz C.A."/>
            <person name="Li J.H."/>
            <person name="Li Y.-P."/>
            <person name="Lin X."/>
            <person name="Liu S.X."/>
            <person name="Liu Z.A."/>
            <person name="Luros J.S."/>
            <person name="Maiti R."/>
            <person name="Marziali A."/>
            <person name="Militscher J."/>
            <person name="Miranda M."/>
            <person name="Nguyen M."/>
            <person name="Nierman W.C."/>
            <person name="Osborne B.I."/>
            <person name="Pai G."/>
            <person name="Peterson J."/>
            <person name="Pham P.K."/>
            <person name="Rizzo M."/>
            <person name="Rooney T."/>
            <person name="Rowley D."/>
            <person name="Sakano H."/>
            <person name="Salzberg S.L."/>
            <person name="Schwartz J.R."/>
            <person name="Shinn P."/>
            <person name="Southwick A.M."/>
            <person name="Sun H."/>
            <person name="Tallon L.J."/>
            <person name="Tambunga G."/>
            <person name="Toriumi M.J."/>
            <person name="Town C.D."/>
            <person name="Utterback T."/>
            <person name="Van Aken S."/>
            <person name="Vaysberg M."/>
            <person name="Vysotskaia V.S."/>
            <person name="Walker M."/>
            <person name="Wu D."/>
            <person name="Yu G."/>
            <person name="Fraser C.M."/>
            <person name="Venter J.C."/>
            <person name="Davis R.W."/>
        </authorList>
    </citation>
    <scope>NUCLEOTIDE SEQUENCE [LARGE SCALE GENOMIC DNA]</scope>
    <source>
        <strain>cv. Columbia</strain>
    </source>
</reference>
<reference key="2">
    <citation type="journal article" date="2017" name="Plant J.">
        <title>Araport11: a complete reannotation of the Arabidopsis thaliana reference genome.</title>
        <authorList>
            <person name="Cheng C.Y."/>
            <person name="Krishnakumar V."/>
            <person name="Chan A.P."/>
            <person name="Thibaud-Nissen F."/>
            <person name="Schobel S."/>
            <person name="Town C.D."/>
        </authorList>
    </citation>
    <scope>GENOME REANNOTATION</scope>
    <source>
        <strain>cv. Columbia</strain>
    </source>
</reference>
<reference key="3">
    <citation type="journal article" date="2003" name="Science">
        <title>Empirical analysis of transcriptional activity in the Arabidopsis genome.</title>
        <authorList>
            <person name="Yamada K."/>
            <person name="Lim J."/>
            <person name="Dale J.M."/>
            <person name="Chen H."/>
            <person name="Shinn P."/>
            <person name="Palm C.J."/>
            <person name="Southwick A.M."/>
            <person name="Wu H.C."/>
            <person name="Kim C.J."/>
            <person name="Nguyen M."/>
            <person name="Pham P.K."/>
            <person name="Cheuk R.F."/>
            <person name="Karlin-Newmann G."/>
            <person name="Liu S.X."/>
            <person name="Lam B."/>
            <person name="Sakano H."/>
            <person name="Wu T."/>
            <person name="Yu G."/>
            <person name="Miranda M."/>
            <person name="Quach H.L."/>
            <person name="Tripp M."/>
            <person name="Chang C.H."/>
            <person name="Lee J.M."/>
            <person name="Toriumi M.J."/>
            <person name="Chan M.M."/>
            <person name="Tang C.C."/>
            <person name="Onodera C.S."/>
            <person name="Deng J.M."/>
            <person name="Akiyama K."/>
            <person name="Ansari Y."/>
            <person name="Arakawa T."/>
            <person name="Banh J."/>
            <person name="Banno F."/>
            <person name="Bowser L."/>
            <person name="Brooks S.Y."/>
            <person name="Carninci P."/>
            <person name="Chao Q."/>
            <person name="Choy N."/>
            <person name="Enju A."/>
            <person name="Goldsmith A.D."/>
            <person name="Gurjal M."/>
            <person name="Hansen N.F."/>
            <person name="Hayashizaki Y."/>
            <person name="Johnson-Hopson C."/>
            <person name="Hsuan V.W."/>
            <person name="Iida K."/>
            <person name="Karnes M."/>
            <person name="Khan S."/>
            <person name="Koesema E."/>
            <person name="Ishida J."/>
            <person name="Jiang P.X."/>
            <person name="Jones T."/>
            <person name="Kawai J."/>
            <person name="Kamiya A."/>
            <person name="Meyers C."/>
            <person name="Nakajima M."/>
            <person name="Narusaka M."/>
            <person name="Seki M."/>
            <person name="Sakurai T."/>
            <person name="Satou M."/>
            <person name="Tamse R."/>
            <person name="Vaysberg M."/>
            <person name="Wallender E.K."/>
            <person name="Wong C."/>
            <person name="Yamamura Y."/>
            <person name="Yuan S."/>
            <person name="Shinozaki K."/>
            <person name="Davis R.W."/>
            <person name="Theologis A."/>
            <person name="Ecker J.R."/>
        </authorList>
    </citation>
    <scope>NUCLEOTIDE SEQUENCE [LARGE SCALE MRNA]</scope>
    <source>
        <strain>cv. Columbia</strain>
    </source>
</reference>
<reference key="4">
    <citation type="submission" date="2005-03" db="EMBL/GenBank/DDBJ databases">
        <title>Large-scale analysis of RIKEN Arabidopsis full-length (RAFL) cDNAs.</title>
        <authorList>
            <person name="Totoki Y."/>
            <person name="Seki M."/>
            <person name="Ishida J."/>
            <person name="Nakajima M."/>
            <person name="Enju A."/>
            <person name="Kamiya A."/>
            <person name="Narusaka M."/>
            <person name="Shin-i T."/>
            <person name="Nakagawa M."/>
            <person name="Sakamoto N."/>
            <person name="Oishi K."/>
            <person name="Kohara Y."/>
            <person name="Kobayashi M."/>
            <person name="Toyoda A."/>
            <person name="Sakaki Y."/>
            <person name="Sakurai T."/>
            <person name="Iida K."/>
            <person name="Akiyama K."/>
            <person name="Satou M."/>
            <person name="Toyoda T."/>
            <person name="Konagaya A."/>
            <person name="Carninci P."/>
            <person name="Kawai J."/>
            <person name="Hayashizaki Y."/>
            <person name="Shinozaki K."/>
        </authorList>
    </citation>
    <scope>NUCLEOTIDE SEQUENCE [LARGE SCALE MRNA]</scope>
    <source>
        <strain>cv. Columbia</strain>
    </source>
</reference>
<reference key="5">
    <citation type="journal article" date="2005" name="Mol. Plant Microbe Interact.">
        <title>Signal signature and transcriptome changes of Arabidopsis during pathogen and insect attack.</title>
        <authorList>
            <person name="De Vos M."/>
            <person name="Van Oosten V.R."/>
            <person name="Van Poecke R.M."/>
            <person name="Van Pelt J.A."/>
            <person name="Pozo M.J."/>
            <person name="Mueller M.J."/>
            <person name="Buchala A.J."/>
            <person name="Metraux J.P."/>
            <person name="Van Loon L.C."/>
            <person name="Dicke M."/>
            <person name="Pieterse C.M."/>
        </authorList>
    </citation>
    <scope>INDUCTION BY APHID</scope>
</reference>
<reference key="6">
    <citation type="journal article" date="2011" name="Plant Cell">
        <title>Metabolic engineering in Nicotiana benthamiana reveals key enzyme functions in Arabidopsis indole glucosinolate modification.</title>
        <authorList>
            <person name="Pfalz M."/>
            <person name="Mikkelsen M.D."/>
            <person name="Bednarek P."/>
            <person name="Olsen C.E."/>
            <person name="Halkier B.A."/>
            <person name="Kroymann J."/>
        </authorList>
    </citation>
    <scope>FUNCTION</scope>
</reference>
<dbReference type="EC" id="2.1.1.-" evidence="6"/>
<dbReference type="EMBL" id="AC012190">
    <property type="protein sequence ID" value="AAF80649.1"/>
    <property type="molecule type" value="Genomic_DNA"/>
</dbReference>
<dbReference type="EMBL" id="CP002684">
    <property type="protein sequence ID" value="AEE30066.1"/>
    <property type="molecule type" value="Genomic_DNA"/>
</dbReference>
<dbReference type="EMBL" id="AF344315">
    <property type="protein sequence ID" value="AAK06866.1"/>
    <property type="molecule type" value="mRNA"/>
</dbReference>
<dbReference type="EMBL" id="AK221556">
    <property type="protein sequence ID" value="BAD94958.1"/>
    <property type="molecule type" value="mRNA"/>
</dbReference>
<dbReference type="PIR" id="D86344">
    <property type="entry name" value="D86344"/>
</dbReference>
<dbReference type="RefSeq" id="NP_001319057.1">
    <property type="nucleotide sequence ID" value="NM_001332485.1"/>
</dbReference>
<dbReference type="SMR" id="Q9LPU7"/>
<dbReference type="FunCoup" id="Q9LPU7">
    <property type="interactions" value="403"/>
</dbReference>
<dbReference type="STRING" id="3702.Q9LPU7"/>
<dbReference type="PaxDb" id="3702-AT1G21120.1"/>
<dbReference type="ProteomicsDB" id="228836"/>
<dbReference type="EnsemblPlants" id="AT1G21120.1">
    <property type="protein sequence ID" value="AT1G21120.1"/>
    <property type="gene ID" value="AT1G21120"/>
</dbReference>
<dbReference type="GeneID" id="838708"/>
<dbReference type="Gramene" id="AT1G21120.1">
    <property type="protein sequence ID" value="AT1G21120.1"/>
    <property type="gene ID" value="AT1G21120"/>
</dbReference>
<dbReference type="KEGG" id="ath:AT1G21120"/>
<dbReference type="Araport" id="AT1G21120"/>
<dbReference type="TAIR" id="AT1G21120">
    <property type="gene designation" value="IGMT2"/>
</dbReference>
<dbReference type="eggNOG" id="KOG3178">
    <property type="taxonomic scope" value="Eukaryota"/>
</dbReference>
<dbReference type="HOGENOM" id="CLU_005533_12_1_1"/>
<dbReference type="InParanoid" id="Q9LPU7"/>
<dbReference type="PhylomeDB" id="Q9LPU7"/>
<dbReference type="BioCyc" id="ARA:AT1G21120-MONOMER"/>
<dbReference type="PRO" id="PR:Q9LPU7"/>
<dbReference type="Proteomes" id="UP000006548">
    <property type="component" value="Chromosome 1"/>
</dbReference>
<dbReference type="ExpressionAtlas" id="Q9LPU7">
    <property type="expression patterns" value="baseline and differential"/>
</dbReference>
<dbReference type="GO" id="GO:0008168">
    <property type="term" value="F:methyltransferase activity"/>
    <property type="evidence" value="ECO:0000314"/>
    <property type="project" value="TAIR"/>
</dbReference>
<dbReference type="GO" id="GO:0008171">
    <property type="term" value="F:O-methyltransferase activity"/>
    <property type="evidence" value="ECO:0007669"/>
    <property type="project" value="InterPro"/>
</dbReference>
<dbReference type="GO" id="GO:0046983">
    <property type="term" value="F:protein dimerization activity"/>
    <property type="evidence" value="ECO:0007669"/>
    <property type="project" value="InterPro"/>
</dbReference>
<dbReference type="GO" id="GO:1990110">
    <property type="term" value="P:callus formation"/>
    <property type="evidence" value="ECO:0000315"/>
    <property type="project" value="TAIR"/>
</dbReference>
<dbReference type="GO" id="GO:0042343">
    <property type="term" value="P:indole glucosinolate metabolic process"/>
    <property type="evidence" value="ECO:0000314"/>
    <property type="project" value="TAIR"/>
</dbReference>
<dbReference type="GO" id="GO:0032259">
    <property type="term" value="P:methylation"/>
    <property type="evidence" value="ECO:0007669"/>
    <property type="project" value="UniProtKB-KW"/>
</dbReference>
<dbReference type="FunFam" id="1.10.10.10:FF:000357">
    <property type="entry name" value="Caffeic acid 3-O-methyltransferase"/>
    <property type="match status" value="1"/>
</dbReference>
<dbReference type="FunFam" id="3.40.50.150:FF:000061">
    <property type="entry name" value="Caffeic acid O-methyltransferase"/>
    <property type="match status" value="1"/>
</dbReference>
<dbReference type="Gene3D" id="3.40.50.150">
    <property type="entry name" value="Vaccinia Virus protein VP39"/>
    <property type="match status" value="1"/>
</dbReference>
<dbReference type="Gene3D" id="1.10.10.10">
    <property type="entry name" value="Winged helix-like DNA-binding domain superfamily/Winged helix DNA-binding domain"/>
    <property type="match status" value="1"/>
</dbReference>
<dbReference type="InterPro" id="IPR016461">
    <property type="entry name" value="COMT-like"/>
</dbReference>
<dbReference type="InterPro" id="IPR001077">
    <property type="entry name" value="O_MeTrfase_dom"/>
</dbReference>
<dbReference type="InterPro" id="IPR012967">
    <property type="entry name" value="Plant_O-MeTrfase_dimerisation"/>
</dbReference>
<dbReference type="InterPro" id="IPR029063">
    <property type="entry name" value="SAM-dependent_MTases_sf"/>
</dbReference>
<dbReference type="InterPro" id="IPR036388">
    <property type="entry name" value="WH-like_DNA-bd_sf"/>
</dbReference>
<dbReference type="InterPro" id="IPR036390">
    <property type="entry name" value="WH_DNA-bd_sf"/>
</dbReference>
<dbReference type="PANTHER" id="PTHR11746">
    <property type="entry name" value="O-METHYLTRANSFERASE"/>
    <property type="match status" value="1"/>
</dbReference>
<dbReference type="Pfam" id="PF08100">
    <property type="entry name" value="Dimerisation"/>
    <property type="match status" value="1"/>
</dbReference>
<dbReference type="Pfam" id="PF00891">
    <property type="entry name" value="Methyltransf_2"/>
    <property type="match status" value="1"/>
</dbReference>
<dbReference type="PIRSF" id="PIRSF005739">
    <property type="entry name" value="O-mtase"/>
    <property type="match status" value="1"/>
</dbReference>
<dbReference type="SUPFAM" id="SSF53335">
    <property type="entry name" value="S-adenosyl-L-methionine-dependent methyltransferases"/>
    <property type="match status" value="1"/>
</dbReference>
<dbReference type="SUPFAM" id="SSF46785">
    <property type="entry name" value="Winged helix' DNA-binding domain"/>
    <property type="match status" value="1"/>
</dbReference>
<dbReference type="PROSITE" id="PS51683">
    <property type="entry name" value="SAM_OMT_II"/>
    <property type="match status" value="1"/>
</dbReference>
<comment type="function">
    <text evidence="4">Involved in indole glucosinolate biosynthesis. Catalyzes methoxylation reactions of the glucosinolate indole ring. Converts the hydroxy intermediates 4-hydroxy-indol-3-yl-methylglucosinolate (4OH-I3M) and 1-hydroxy-indol-3-yl-methylglucosinolate (1OH-I3M) to 4-methoxy-indol-3-yl-methylglucosinolate (4MO-I3M) and 1-methoxy-indol-3-yl-methylglucosinolate (1MO-I3M), respectively.</text>
</comment>
<comment type="pathway">
    <text evidence="6">Secondary metabolite biosynthesis.</text>
</comment>
<comment type="induction">
    <text evidence="3">By the green peach aphid Myzus persicae.</text>
</comment>
<comment type="similarity">
    <text evidence="2">Belongs to the class I-like SAM-binding methyltransferase superfamily. Cation-independent O-methyltransferase family.</text>
</comment>
<proteinExistence type="evidence at transcript level"/>
<protein>
    <recommendedName>
        <fullName evidence="5">Indole glucosinolate O-methyltransferase 2</fullName>
        <ecNumber evidence="6">2.1.1.-</ecNumber>
    </recommendedName>
</protein>
<accession>Q9LPU7</accession>
<accession>Q56XW7</accession>
<organism>
    <name type="scientific">Arabidopsis thaliana</name>
    <name type="common">Mouse-ear cress</name>
    <dbReference type="NCBI Taxonomy" id="3702"/>
    <lineage>
        <taxon>Eukaryota</taxon>
        <taxon>Viridiplantae</taxon>
        <taxon>Streptophyta</taxon>
        <taxon>Embryophyta</taxon>
        <taxon>Tracheophyta</taxon>
        <taxon>Spermatophyta</taxon>
        <taxon>Magnoliopsida</taxon>
        <taxon>eudicotyledons</taxon>
        <taxon>Gunneridae</taxon>
        <taxon>Pentapetalae</taxon>
        <taxon>rosids</taxon>
        <taxon>malvids</taxon>
        <taxon>Brassicales</taxon>
        <taxon>Brassicaceae</taxon>
        <taxon>Camelineae</taxon>
        <taxon>Arabidopsis</taxon>
    </lineage>
</organism>